<sequence>MHDFPDIDFTQRFIFDESDVRGELVALERSYAEVLAKHPYPEPVAQLLGELMAAAALLVGTLKFDGLLILQARSSGAVPLLMVECSSERELRGIARYDEALITPGAGLQDLMPDGSLALTVDPRQGKRYQGIVALDGVDLSESLSNYFVMSEQLGTRFWLKADGHRARGLLLQQLPAAQITDPEERDASWEHVVTLASTLTAEEMLSLDNQTVLHRLYHEDPVRLFDVQPICFRCSCSRERSANALASLGLEDAQQLVIEHNGSIEIDCQFCNERYLFDATDVAQLFAGGGVDSPSDTRH</sequence>
<comment type="function">
    <text evidence="1">Redox regulated molecular chaperone. Protects both thermally unfolding and oxidatively damaged proteins from irreversible aggregation. Plays an important role in the bacterial defense system toward oxidative stress.</text>
</comment>
<comment type="subcellular location">
    <subcellularLocation>
        <location evidence="1">Cytoplasm</location>
    </subcellularLocation>
</comment>
<comment type="PTM">
    <text evidence="1">Under oxidizing conditions two disulfide bonds are formed involving the reactive cysteines. Under reducing conditions zinc is bound to the reactive cysteines and the protein is inactive.</text>
</comment>
<comment type="similarity">
    <text evidence="1">Belongs to the HSP33 family.</text>
</comment>
<reference key="1">
    <citation type="journal article" date="2003" name="Proc. Natl. Acad. Sci. U.S.A.">
        <title>The complete genome sequence of the Arabidopsis and tomato pathogen Pseudomonas syringae pv. tomato DC3000.</title>
        <authorList>
            <person name="Buell C.R."/>
            <person name="Joardar V."/>
            <person name="Lindeberg M."/>
            <person name="Selengut J."/>
            <person name="Paulsen I.T."/>
            <person name="Gwinn M.L."/>
            <person name="Dodson R.J."/>
            <person name="DeBoy R.T."/>
            <person name="Durkin A.S."/>
            <person name="Kolonay J.F."/>
            <person name="Madupu R."/>
            <person name="Daugherty S.C."/>
            <person name="Brinkac L.M."/>
            <person name="Beanan M.J."/>
            <person name="Haft D.H."/>
            <person name="Nelson W.C."/>
            <person name="Davidsen T.M."/>
            <person name="Zafar N."/>
            <person name="Zhou L."/>
            <person name="Liu J."/>
            <person name="Yuan Q."/>
            <person name="Khouri H.M."/>
            <person name="Fedorova N.B."/>
            <person name="Tran B."/>
            <person name="Russell D."/>
            <person name="Berry K.J."/>
            <person name="Utterback T.R."/>
            <person name="Van Aken S.E."/>
            <person name="Feldblyum T.V."/>
            <person name="D'Ascenzo M."/>
            <person name="Deng W.-L."/>
            <person name="Ramos A.R."/>
            <person name="Alfano J.R."/>
            <person name="Cartinhour S."/>
            <person name="Chatterjee A.K."/>
            <person name="Delaney T.P."/>
            <person name="Lazarowitz S.G."/>
            <person name="Martin G.B."/>
            <person name="Schneider D.J."/>
            <person name="Tang X."/>
            <person name="Bender C.L."/>
            <person name="White O."/>
            <person name="Fraser C.M."/>
            <person name="Collmer A."/>
        </authorList>
    </citation>
    <scope>NUCLEOTIDE SEQUENCE [LARGE SCALE GENOMIC DNA]</scope>
    <source>
        <strain>ATCC BAA-871 / DC3000</strain>
    </source>
</reference>
<keyword id="KW-0143">Chaperone</keyword>
<keyword id="KW-0963">Cytoplasm</keyword>
<keyword id="KW-1015">Disulfide bond</keyword>
<keyword id="KW-0676">Redox-active center</keyword>
<keyword id="KW-1185">Reference proteome</keyword>
<keyword id="KW-0862">Zinc</keyword>
<name>HSLO_PSESM</name>
<organism>
    <name type="scientific">Pseudomonas syringae pv. tomato (strain ATCC BAA-871 / DC3000)</name>
    <dbReference type="NCBI Taxonomy" id="223283"/>
    <lineage>
        <taxon>Bacteria</taxon>
        <taxon>Pseudomonadati</taxon>
        <taxon>Pseudomonadota</taxon>
        <taxon>Gammaproteobacteria</taxon>
        <taxon>Pseudomonadales</taxon>
        <taxon>Pseudomonadaceae</taxon>
        <taxon>Pseudomonas</taxon>
    </lineage>
</organism>
<proteinExistence type="inferred from homology"/>
<protein>
    <recommendedName>
        <fullName evidence="1">33 kDa chaperonin</fullName>
    </recommendedName>
    <alternativeName>
        <fullName evidence="1">Heat shock protein 33 homolog</fullName>
        <shortName evidence="1">HSP33</shortName>
    </alternativeName>
</protein>
<evidence type="ECO:0000255" key="1">
    <source>
        <dbReference type="HAMAP-Rule" id="MF_00117"/>
    </source>
</evidence>
<gene>
    <name evidence="1" type="primary">hslO</name>
    <name type="ordered locus">PSPTO_0238</name>
</gene>
<feature type="chain" id="PRO_0000192195" description="33 kDa chaperonin">
    <location>
        <begin position="1"/>
        <end position="300"/>
    </location>
</feature>
<feature type="disulfide bond" description="Redox-active" evidence="1">
    <location>
        <begin position="235"/>
        <end position="237"/>
    </location>
</feature>
<feature type="disulfide bond" description="Redox-active" evidence="1">
    <location>
        <begin position="269"/>
        <end position="272"/>
    </location>
</feature>
<dbReference type="EMBL" id="AE016853">
    <property type="protein sequence ID" value="AAO53784.1"/>
    <property type="molecule type" value="Genomic_DNA"/>
</dbReference>
<dbReference type="RefSeq" id="NP_790089.1">
    <property type="nucleotide sequence ID" value="NC_004578.1"/>
</dbReference>
<dbReference type="RefSeq" id="WP_005613652.1">
    <property type="nucleotide sequence ID" value="NC_004578.1"/>
</dbReference>
<dbReference type="SMR" id="Q88AZ5"/>
<dbReference type="STRING" id="223283.PSPTO_0238"/>
<dbReference type="GeneID" id="1181846"/>
<dbReference type="KEGG" id="pst:PSPTO_0238"/>
<dbReference type="PATRIC" id="fig|223283.9.peg.249"/>
<dbReference type="eggNOG" id="COG1281">
    <property type="taxonomic scope" value="Bacteria"/>
</dbReference>
<dbReference type="HOGENOM" id="CLU_054493_0_0_6"/>
<dbReference type="OrthoDB" id="9793753at2"/>
<dbReference type="PhylomeDB" id="Q88AZ5"/>
<dbReference type="Proteomes" id="UP000002515">
    <property type="component" value="Chromosome"/>
</dbReference>
<dbReference type="GO" id="GO:0005737">
    <property type="term" value="C:cytoplasm"/>
    <property type="evidence" value="ECO:0007669"/>
    <property type="project" value="UniProtKB-SubCell"/>
</dbReference>
<dbReference type="GO" id="GO:0044183">
    <property type="term" value="F:protein folding chaperone"/>
    <property type="evidence" value="ECO:0007669"/>
    <property type="project" value="TreeGrafter"/>
</dbReference>
<dbReference type="GO" id="GO:0051082">
    <property type="term" value="F:unfolded protein binding"/>
    <property type="evidence" value="ECO:0007669"/>
    <property type="project" value="UniProtKB-UniRule"/>
</dbReference>
<dbReference type="GO" id="GO:0042026">
    <property type="term" value="P:protein refolding"/>
    <property type="evidence" value="ECO:0007669"/>
    <property type="project" value="TreeGrafter"/>
</dbReference>
<dbReference type="CDD" id="cd00498">
    <property type="entry name" value="Hsp33"/>
    <property type="match status" value="1"/>
</dbReference>
<dbReference type="Gene3D" id="1.10.287.480">
    <property type="entry name" value="helix hairpin bin"/>
    <property type="match status" value="1"/>
</dbReference>
<dbReference type="Gene3D" id="3.55.30.10">
    <property type="entry name" value="Hsp33 domain"/>
    <property type="match status" value="1"/>
</dbReference>
<dbReference type="Gene3D" id="3.90.1280.10">
    <property type="entry name" value="HSP33 redox switch-like"/>
    <property type="match status" value="1"/>
</dbReference>
<dbReference type="HAMAP" id="MF_00117">
    <property type="entry name" value="HslO"/>
    <property type="match status" value="1"/>
</dbReference>
<dbReference type="InterPro" id="IPR000397">
    <property type="entry name" value="Heat_shock_Hsp33"/>
</dbReference>
<dbReference type="InterPro" id="IPR016154">
    <property type="entry name" value="Heat_shock_Hsp33_C"/>
</dbReference>
<dbReference type="InterPro" id="IPR016153">
    <property type="entry name" value="Heat_shock_Hsp33_N"/>
</dbReference>
<dbReference type="InterPro" id="IPR023212">
    <property type="entry name" value="Hsp33_helix_hairpin_bin_dom_sf"/>
</dbReference>
<dbReference type="NCBIfam" id="NF001033">
    <property type="entry name" value="PRK00114.1"/>
    <property type="match status" value="1"/>
</dbReference>
<dbReference type="PANTHER" id="PTHR30111">
    <property type="entry name" value="33 KDA CHAPERONIN"/>
    <property type="match status" value="1"/>
</dbReference>
<dbReference type="PANTHER" id="PTHR30111:SF1">
    <property type="entry name" value="33 KDA CHAPERONIN"/>
    <property type="match status" value="1"/>
</dbReference>
<dbReference type="Pfam" id="PF01430">
    <property type="entry name" value="HSP33"/>
    <property type="match status" value="1"/>
</dbReference>
<dbReference type="PIRSF" id="PIRSF005261">
    <property type="entry name" value="Heat_shock_Hsp33"/>
    <property type="match status" value="1"/>
</dbReference>
<dbReference type="SUPFAM" id="SSF64397">
    <property type="entry name" value="Hsp33 domain"/>
    <property type="match status" value="1"/>
</dbReference>
<dbReference type="SUPFAM" id="SSF118352">
    <property type="entry name" value="HSP33 redox switch-like"/>
    <property type="match status" value="1"/>
</dbReference>
<accession>Q88AZ5</accession>